<sequence length="188" mass="21431">MKISANSIRTGNILVYSNDLWVVSRTPEHTQPGKGGAYVQVEMKNLKTGTKRNERFSSSDYLEKAELEQKDYQFLYFEGNDLVLMDIKHFDQINVPKEILEEKLPFLAENMIVKVEFYNEKPLNIELPPTVIIEISETDPVIKGATATASYKPAILTNGIKVKVPQYLEIGEKIVVKTDDMTYVERAK</sequence>
<comment type="function">
    <text evidence="1">Involved in peptide bond synthesis. Stimulates efficient translation and peptide-bond synthesis on native or reconstituted 70S ribosomes in vitro. Probably functions indirectly by altering the affinity of the ribosome for aminoacyl-tRNA, thus increasing their reactivity as acceptors for peptidyl transferase.</text>
</comment>
<comment type="pathway">
    <text evidence="1">Protein biosynthesis; polypeptide chain elongation.</text>
</comment>
<comment type="subcellular location">
    <subcellularLocation>
        <location evidence="1">Cytoplasm</location>
    </subcellularLocation>
</comment>
<comment type="similarity">
    <text evidence="1">Belongs to the elongation factor P family.</text>
</comment>
<feature type="chain" id="PRO_1000010836" description="Elongation factor P">
    <location>
        <begin position="1"/>
        <end position="188"/>
    </location>
</feature>
<evidence type="ECO:0000255" key="1">
    <source>
        <dbReference type="HAMAP-Rule" id="MF_00141"/>
    </source>
</evidence>
<reference key="1">
    <citation type="submission" date="2007-09" db="EMBL/GenBank/DDBJ databases">
        <title>Complete genome sequence of Rickettsia canadensis.</title>
        <authorList>
            <person name="Madan A."/>
            <person name="Fahey J."/>
            <person name="Helton E."/>
            <person name="Ketteman M."/>
            <person name="Madan A."/>
            <person name="Rodrigues S."/>
            <person name="Sanchez A."/>
            <person name="Whiting M."/>
            <person name="Dasch G."/>
            <person name="Eremeeva M."/>
        </authorList>
    </citation>
    <scope>NUCLEOTIDE SEQUENCE [LARGE SCALE GENOMIC DNA]</scope>
    <source>
        <strain>McKiel</strain>
    </source>
</reference>
<proteinExistence type="inferred from homology"/>
<organism>
    <name type="scientific">Rickettsia canadensis (strain McKiel)</name>
    <dbReference type="NCBI Taxonomy" id="293613"/>
    <lineage>
        <taxon>Bacteria</taxon>
        <taxon>Pseudomonadati</taxon>
        <taxon>Pseudomonadota</taxon>
        <taxon>Alphaproteobacteria</taxon>
        <taxon>Rickettsiales</taxon>
        <taxon>Rickettsiaceae</taxon>
        <taxon>Rickettsieae</taxon>
        <taxon>Rickettsia</taxon>
        <taxon>belli group</taxon>
    </lineage>
</organism>
<accession>A8EXY7</accession>
<name>EFP_RICCK</name>
<keyword id="KW-0963">Cytoplasm</keyword>
<keyword id="KW-0251">Elongation factor</keyword>
<keyword id="KW-0648">Protein biosynthesis</keyword>
<gene>
    <name evidence="1" type="primary">efp</name>
    <name type="ordered locus">A1E_01375</name>
</gene>
<protein>
    <recommendedName>
        <fullName evidence="1">Elongation factor P</fullName>
        <shortName evidence="1">EF-P</shortName>
    </recommendedName>
</protein>
<dbReference type="EMBL" id="CP000409">
    <property type="protein sequence ID" value="ABV73220.1"/>
    <property type="molecule type" value="Genomic_DNA"/>
</dbReference>
<dbReference type="RefSeq" id="WP_012148419.1">
    <property type="nucleotide sequence ID" value="NC_009879.1"/>
</dbReference>
<dbReference type="SMR" id="A8EXY7"/>
<dbReference type="STRING" id="293613.A1E_01375"/>
<dbReference type="KEGG" id="rcm:A1E_01375"/>
<dbReference type="eggNOG" id="COG0231">
    <property type="taxonomic scope" value="Bacteria"/>
</dbReference>
<dbReference type="HOGENOM" id="CLU_074944_1_1_5"/>
<dbReference type="UniPathway" id="UPA00345"/>
<dbReference type="Proteomes" id="UP000007056">
    <property type="component" value="Chromosome"/>
</dbReference>
<dbReference type="GO" id="GO:0005737">
    <property type="term" value="C:cytoplasm"/>
    <property type="evidence" value="ECO:0007669"/>
    <property type="project" value="UniProtKB-SubCell"/>
</dbReference>
<dbReference type="GO" id="GO:0003746">
    <property type="term" value="F:translation elongation factor activity"/>
    <property type="evidence" value="ECO:0007669"/>
    <property type="project" value="UniProtKB-UniRule"/>
</dbReference>
<dbReference type="GO" id="GO:0043043">
    <property type="term" value="P:peptide biosynthetic process"/>
    <property type="evidence" value="ECO:0007669"/>
    <property type="project" value="InterPro"/>
</dbReference>
<dbReference type="CDD" id="cd04470">
    <property type="entry name" value="S1_EF-P_repeat_1"/>
    <property type="match status" value="1"/>
</dbReference>
<dbReference type="FunFam" id="2.40.50.140:FF:000004">
    <property type="entry name" value="Elongation factor P"/>
    <property type="match status" value="1"/>
</dbReference>
<dbReference type="FunFam" id="2.40.50.140:FF:000009">
    <property type="entry name" value="Elongation factor P"/>
    <property type="match status" value="1"/>
</dbReference>
<dbReference type="Gene3D" id="2.30.30.30">
    <property type="match status" value="1"/>
</dbReference>
<dbReference type="Gene3D" id="2.40.50.140">
    <property type="entry name" value="Nucleic acid-binding proteins"/>
    <property type="match status" value="2"/>
</dbReference>
<dbReference type="HAMAP" id="MF_00141">
    <property type="entry name" value="EF_P"/>
    <property type="match status" value="1"/>
</dbReference>
<dbReference type="InterPro" id="IPR015365">
    <property type="entry name" value="Elong-fact-P_C"/>
</dbReference>
<dbReference type="InterPro" id="IPR012340">
    <property type="entry name" value="NA-bd_OB-fold"/>
</dbReference>
<dbReference type="InterPro" id="IPR014722">
    <property type="entry name" value="Rib_uL2_dom2"/>
</dbReference>
<dbReference type="InterPro" id="IPR020599">
    <property type="entry name" value="Transl_elong_fac_P/YeiP"/>
</dbReference>
<dbReference type="InterPro" id="IPR013185">
    <property type="entry name" value="Transl_elong_KOW-like"/>
</dbReference>
<dbReference type="InterPro" id="IPR001059">
    <property type="entry name" value="Transl_elong_P/YeiP_cen"/>
</dbReference>
<dbReference type="InterPro" id="IPR013852">
    <property type="entry name" value="Transl_elong_P/YeiP_CS"/>
</dbReference>
<dbReference type="InterPro" id="IPR011768">
    <property type="entry name" value="Transl_elongation_fac_P"/>
</dbReference>
<dbReference type="InterPro" id="IPR008991">
    <property type="entry name" value="Translation_prot_SH3-like_sf"/>
</dbReference>
<dbReference type="NCBIfam" id="TIGR00038">
    <property type="entry name" value="efp"/>
    <property type="match status" value="1"/>
</dbReference>
<dbReference type="NCBIfam" id="NF001810">
    <property type="entry name" value="PRK00529.1"/>
    <property type="match status" value="1"/>
</dbReference>
<dbReference type="PANTHER" id="PTHR30053">
    <property type="entry name" value="ELONGATION FACTOR P"/>
    <property type="match status" value="1"/>
</dbReference>
<dbReference type="PANTHER" id="PTHR30053:SF14">
    <property type="entry name" value="TRANSLATION ELONGATION FACTOR KOW-LIKE DOMAIN-CONTAINING PROTEIN"/>
    <property type="match status" value="1"/>
</dbReference>
<dbReference type="Pfam" id="PF01132">
    <property type="entry name" value="EFP"/>
    <property type="match status" value="1"/>
</dbReference>
<dbReference type="Pfam" id="PF08207">
    <property type="entry name" value="EFP_N"/>
    <property type="match status" value="1"/>
</dbReference>
<dbReference type="Pfam" id="PF09285">
    <property type="entry name" value="Elong-fact-P_C"/>
    <property type="match status" value="1"/>
</dbReference>
<dbReference type="PIRSF" id="PIRSF005901">
    <property type="entry name" value="EF-P"/>
    <property type="match status" value="1"/>
</dbReference>
<dbReference type="SMART" id="SM01185">
    <property type="entry name" value="EFP"/>
    <property type="match status" value="1"/>
</dbReference>
<dbReference type="SMART" id="SM00841">
    <property type="entry name" value="Elong-fact-P_C"/>
    <property type="match status" value="1"/>
</dbReference>
<dbReference type="SUPFAM" id="SSF50249">
    <property type="entry name" value="Nucleic acid-binding proteins"/>
    <property type="match status" value="2"/>
</dbReference>
<dbReference type="SUPFAM" id="SSF50104">
    <property type="entry name" value="Translation proteins SH3-like domain"/>
    <property type="match status" value="1"/>
</dbReference>
<dbReference type="PROSITE" id="PS01275">
    <property type="entry name" value="EFP"/>
    <property type="match status" value="1"/>
</dbReference>